<evidence type="ECO:0000250" key="1"/>
<evidence type="ECO:0000255" key="2"/>
<evidence type="ECO:0000305" key="3"/>
<sequence>MVWPRLVLAACLLAMPPAAAECLSQCSLCAVRTQDGPKPINPLICSLECQETLLPSEEWERCQGILSFFPSALRLRDQSGLDSRAALEEVYGELAKRARPFLQELEKSRFLPSTPAEDKFRGLLGGLGEGLGSEAMGAPQLNSGAVEAAALDFDEDPKEQVKRYGGFLRKYPKRSSEVAREGDRDGDNAGHEDLYKRYGGFLRRIRPKLKWDNQKRYGGFLRRQFKVVTRSQEDPNAYSEEFFDV</sequence>
<proteinExistence type="evidence at transcript level"/>
<accession>Q60478</accession>
<protein>
    <recommendedName>
        <fullName>Proenkephalin-B</fullName>
    </recommendedName>
    <alternativeName>
        <fullName>Beta-neoendorphin-dynorphin</fullName>
    </alternativeName>
    <alternativeName>
        <fullName>Preprodynorphin</fullName>
    </alternativeName>
    <component>
        <recommendedName>
            <fullName>Alpha-neoendorphin</fullName>
        </recommendedName>
    </component>
    <component>
        <recommendedName>
            <fullName>Beta-neoendorphin</fullName>
        </recommendedName>
    </component>
    <component>
        <recommendedName>
            <fullName>Big dynorphin</fullName>
            <shortName>Big Dyn</shortName>
        </recommendedName>
    </component>
    <component>
        <recommendedName>
            <fullName>Dynorphin A(1-17)</fullName>
            <shortName>Dyn-A17</shortName>
            <shortName>Dynorphin A</shortName>
        </recommendedName>
    </component>
    <component>
        <recommendedName>
            <fullName>Dynorphin A(1-13)</fullName>
        </recommendedName>
    </component>
    <component>
        <recommendedName>
            <fullName>Dynorphin A(1-8)</fullName>
        </recommendedName>
    </component>
    <component>
        <recommendedName>
            <fullName>Leu-enkephalin</fullName>
        </recommendedName>
    </component>
    <component>
        <recommendedName>
            <fullName>Rimorphin</fullName>
        </recommendedName>
        <alternativeName>
            <fullName>Dynorphin B</fullName>
            <shortName>Dyn-B</shortName>
        </alternativeName>
        <alternativeName>
            <fullName>Dynorphin B(1-13)</fullName>
        </alternativeName>
    </component>
    <component>
        <recommendedName>
            <fullName>Leumorphin</fullName>
        </recommendedName>
        <alternativeName>
            <fullName>Dynorphin B-29</fullName>
        </alternativeName>
    </component>
</protein>
<dbReference type="EMBL" id="U38912">
    <property type="protein sequence ID" value="AAC18427.1"/>
    <property type="molecule type" value="mRNA"/>
</dbReference>
<dbReference type="PIR" id="A60410">
    <property type="entry name" value="A60410"/>
</dbReference>
<dbReference type="RefSeq" id="NP_001166468.1">
    <property type="nucleotide sequence ID" value="NM_001172997.1"/>
</dbReference>
<dbReference type="BMRB" id="Q60478"/>
<dbReference type="FunCoup" id="Q60478">
    <property type="interactions" value="161"/>
</dbReference>
<dbReference type="STRING" id="10141.ENSCPOP00000019436"/>
<dbReference type="Ensembl" id="ENSCPOT00000022266.2">
    <property type="protein sequence ID" value="ENSCPOP00000019436.1"/>
    <property type="gene ID" value="ENSCPOG00000024291.2"/>
</dbReference>
<dbReference type="GeneID" id="100135596"/>
<dbReference type="KEGG" id="cpoc:100135596"/>
<dbReference type="CTD" id="5173"/>
<dbReference type="VEuPathDB" id="HostDB:ENSCPOG00000024291"/>
<dbReference type="eggNOG" id="ENOG502RXT4">
    <property type="taxonomic scope" value="Eukaryota"/>
</dbReference>
<dbReference type="GeneTree" id="ENSGT00950000183149"/>
<dbReference type="HOGENOM" id="CLU_070973_1_0_1"/>
<dbReference type="InParanoid" id="Q60478"/>
<dbReference type="OMA" id="CSMCAVQ"/>
<dbReference type="OrthoDB" id="8912385at2759"/>
<dbReference type="TreeFam" id="TF332620"/>
<dbReference type="Proteomes" id="UP000005447">
    <property type="component" value="Unassembled WGS sequence"/>
</dbReference>
<dbReference type="Bgee" id="ENSCPOG00000024291">
    <property type="expression patterns" value="Expressed in hypothalamus and 4 other cell types or tissues"/>
</dbReference>
<dbReference type="GO" id="GO:0043679">
    <property type="term" value="C:axon terminus"/>
    <property type="evidence" value="ECO:0007669"/>
    <property type="project" value="TreeGrafter"/>
</dbReference>
<dbReference type="GO" id="GO:0030425">
    <property type="term" value="C:dendrite"/>
    <property type="evidence" value="ECO:0007669"/>
    <property type="project" value="TreeGrafter"/>
</dbReference>
<dbReference type="GO" id="GO:0005576">
    <property type="term" value="C:extracellular region"/>
    <property type="evidence" value="ECO:0007669"/>
    <property type="project" value="UniProtKB-SubCell"/>
</dbReference>
<dbReference type="GO" id="GO:0098686">
    <property type="term" value="C:hippocampal mossy fiber to CA3 synapse"/>
    <property type="evidence" value="ECO:0007669"/>
    <property type="project" value="Ensembl"/>
</dbReference>
<dbReference type="GO" id="GO:0043025">
    <property type="term" value="C:neuronal cell body"/>
    <property type="evidence" value="ECO:0007669"/>
    <property type="project" value="TreeGrafter"/>
</dbReference>
<dbReference type="GO" id="GO:0098992">
    <property type="term" value="C:neuronal dense core vesicle"/>
    <property type="evidence" value="ECO:0007669"/>
    <property type="project" value="Ensembl"/>
</dbReference>
<dbReference type="GO" id="GO:0005886">
    <property type="term" value="C:plasma membrane"/>
    <property type="evidence" value="ECO:0007669"/>
    <property type="project" value="Ensembl"/>
</dbReference>
<dbReference type="GO" id="GO:0001515">
    <property type="term" value="F:opioid peptide activity"/>
    <property type="evidence" value="ECO:0007669"/>
    <property type="project" value="UniProtKB-KW"/>
</dbReference>
<dbReference type="GO" id="GO:0031628">
    <property type="term" value="F:opioid receptor binding"/>
    <property type="evidence" value="ECO:0007669"/>
    <property type="project" value="TreeGrafter"/>
</dbReference>
<dbReference type="GO" id="GO:0007268">
    <property type="term" value="P:chemical synaptic transmission"/>
    <property type="evidence" value="ECO:0007669"/>
    <property type="project" value="UniProtKB-KW"/>
</dbReference>
<dbReference type="GO" id="GO:0007218">
    <property type="term" value="P:neuropeptide signaling pathway"/>
    <property type="evidence" value="ECO:0007669"/>
    <property type="project" value="UniProtKB-KW"/>
</dbReference>
<dbReference type="GO" id="GO:0007600">
    <property type="term" value="P:sensory perception"/>
    <property type="evidence" value="ECO:0007669"/>
    <property type="project" value="TreeGrafter"/>
</dbReference>
<dbReference type="InterPro" id="IPR006024">
    <property type="entry name" value="Opioid_neupept"/>
</dbReference>
<dbReference type="InterPro" id="IPR000750">
    <property type="entry name" value="Proenkphlin_B"/>
</dbReference>
<dbReference type="PANTHER" id="PTHR11438">
    <property type="entry name" value="PROENKEPHALIN"/>
    <property type="match status" value="1"/>
</dbReference>
<dbReference type="PANTHER" id="PTHR11438:SF4">
    <property type="entry name" value="PROENKEPHALIN-B"/>
    <property type="match status" value="1"/>
</dbReference>
<dbReference type="Pfam" id="PF01160">
    <property type="entry name" value="Opiods_neuropep"/>
    <property type="match status" value="1"/>
</dbReference>
<dbReference type="PRINTS" id="PR01028">
    <property type="entry name" value="OPIOIDPRCRSR"/>
</dbReference>
<dbReference type="PRINTS" id="PR01030">
    <property type="entry name" value="PENKBPRCRSR"/>
</dbReference>
<dbReference type="PROSITE" id="PS01252">
    <property type="entry name" value="OPIOIDS_PRECURSOR"/>
    <property type="match status" value="1"/>
</dbReference>
<organism>
    <name type="scientific">Cavia porcellus</name>
    <name type="common">Guinea pig</name>
    <dbReference type="NCBI Taxonomy" id="10141"/>
    <lineage>
        <taxon>Eukaryota</taxon>
        <taxon>Metazoa</taxon>
        <taxon>Chordata</taxon>
        <taxon>Craniata</taxon>
        <taxon>Vertebrata</taxon>
        <taxon>Euteleostomi</taxon>
        <taxon>Mammalia</taxon>
        <taxon>Eutheria</taxon>
        <taxon>Euarchontoglires</taxon>
        <taxon>Glires</taxon>
        <taxon>Rodentia</taxon>
        <taxon>Hystricomorpha</taxon>
        <taxon>Caviidae</taxon>
        <taxon>Cavia</taxon>
    </lineage>
</organism>
<comment type="function">
    <text evidence="1">Leu-enkephalins compete with and mimic the effects of opiate drugs. They play a role in a number of physiologic functions, including pain perception and responses to stress (By similarity).</text>
</comment>
<comment type="function">
    <text evidence="1">Dynorphin peptides differentially regulate the kappa opioid receptor. Dynorphin A(1-13) has a typical opioid activity, it is 700 times more potent than Leu-enkephalin (By similarity).</text>
</comment>
<comment type="function">
    <text evidence="1">Leumorphin has a typical opioid activity and may have anti-apoptotic effect.</text>
</comment>
<comment type="subcellular location">
    <subcellularLocation>
        <location>Secreted</location>
    </subcellularLocation>
</comment>
<comment type="PTM">
    <text>The N-terminal domain contains 6 conserved cysteines thought to be involved in disulfide bonding and/or processing.</text>
</comment>
<comment type="similarity">
    <text evidence="3">Belongs to the opioid neuropeptide precursor family.</text>
</comment>
<reference key="1">
    <citation type="journal article" date="1996" name="DNA Cell Biol.">
        <title>Guinea pig preprodynorphin mRNA: primary structure and regional quantitation in the brain.</title>
        <authorList>
            <person name="Yuferov V.P."/>
            <person name="Laforge K.S."/>
            <person name="Spangler R."/>
            <person name="Maggos C.E."/>
            <person name="Kreek M.J."/>
        </authorList>
    </citation>
    <scope>NUCLEOTIDE SEQUENCE [MRNA]</scope>
    <source>
        <strain>Hartley</strain>
        <tissue>Adrenal gland</tissue>
        <tissue>Brain</tissue>
    </source>
</reference>
<reference key="2">
    <citation type="journal article" date="1989" name="Neuropeptides">
        <title>Measurement and chromatographic characterization of prodynorphin-derived peptides in the guinea-pig ileum.</title>
        <authorList>
            <person name="Steele P.A."/>
            <person name="Turner C.A."/>
            <person name="Murphy R."/>
        </authorList>
    </citation>
    <scope>IDENTIFICATION OF DYNORPHIN A(1-8); DYNORPHIN A(1-17) AND ALPHA-NEOENDORPHIN</scope>
</reference>
<gene>
    <name type="primary">PDYN</name>
</gene>
<name>PDYN_CAVPO</name>
<feature type="signal peptide" evidence="2">
    <location>
        <begin position="1"/>
        <end position="20"/>
    </location>
</feature>
<feature type="propeptide" id="PRO_0000008169">
    <location>
        <begin position="21"/>
        <end position="161"/>
    </location>
</feature>
<feature type="peptide" id="PRO_0000306341" description="Alpha-neoendorphin">
    <location>
        <begin position="164"/>
        <end position="173"/>
    </location>
</feature>
<feature type="peptide" id="PRO_0000008170" description="Beta-neoendorphin">
    <location>
        <begin position="164"/>
        <end position="172"/>
    </location>
</feature>
<feature type="peptide" id="PRO_0000306342" description="Leu-enkephalin" evidence="1">
    <location>
        <begin position="164"/>
        <end position="168"/>
    </location>
</feature>
<feature type="propeptide" id="PRO_0000008171">
    <location>
        <begin position="175"/>
        <end position="195"/>
    </location>
</feature>
<feature type="peptide" id="PRO_0000306343" description="Big dynorphin" evidence="1">
    <location>
        <begin position="198"/>
        <end position="229"/>
    </location>
</feature>
<feature type="peptide" id="PRO_0000008172" description="Dynorphin A(1-17)">
    <location>
        <begin position="198"/>
        <end position="214"/>
    </location>
</feature>
<feature type="peptide" id="PRO_0000306344" description="Dynorphin A(1-13)" evidence="1">
    <location>
        <begin position="198"/>
        <end position="210"/>
    </location>
</feature>
<feature type="peptide" id="PRO_0000306345" description="Dynorphin A(1-8)">
    <location>
        <begin position="198"/>
        <end position="205"/>
    </location>
</feature>
<feature type="peptide" id="PRO_0000306346" description="Leu-enkephalin" evidence="1">
    <location>
        <begin position="198"/>
        <end position="202"/>
    </location>
</feature>
<feature type="peptide" id="PRO_0000008173" description="Leumorphin">
    <location>
        <begin position="217"/>
        <end position="245"/>
    </location>
</feature>
<feature type="peptide" id="PRO_0000008174" description="Rimorphin" evidence="1">
    <location>
        <begin position="217"/>
        <end position="229"/>
    </location>
</feature>
<feature type="peptide" id="PRO_0000008175" description="Leu-enkephalin">
    <location>
        <begin position="217"/>
        <end position="221"/>
    </location>
</feature>
<keyword id="KW-0165">Cleavage on pair of basic residues</keyword>
<keyword id="KW-1015">Disulfide bond</keyword>
<keyword id="KW-0257">Endorphin</keyword>
<keyword id="KW-0527">Neuropeptide</keyword>
<keyword id="KW-0529">Neurotransmitter</keyword>
<keyword id="KW-0555">Opioid peptide</keyword>
<keyword id="KW-1185">Reference proteome</keyword>
<keyword id="KW-0964">Secreted</keyword>
<keyword id="KW-0732">Signal</keyword>